<proteinExistence type="inferred from homology"/>
<organism>
    <name type="scientific">Influenza A virus (strain A/Leningrad/134/1957 H2N2)</name>
    <dbReference type="NCBI Taxonomy" id="387163"/>
    <lineage>
        <taxon>Viruses</taxon>
        <taxon>Riboviria</taxon>
        <taxon>Orthornavirae</taxon>
        <taxon>Negarnaviricota</taxon>
        <taxon>Polyploviricotina</taxon>
        <taxon>Insthoviricetes</taxon>
        <taxon>Articulavirales</taxon>
        <taxon>Orthomyxoviridae</taxon>
        <taxon>Alphainfluenzavirus</taxon>
        <taxon>Alphainfluenzavirus influenzae</taxon>
        <taxon>Influenza A virus</taxon>
    </lineage>
</organism>
<organismHost>
    <name type="scientific">Aves</name>
    <dbReference type="NCBI Taxonomy" id="8782"/>
</organismHost>
<organismHost>
    <name type="scientific">Homo sapiens</name>
    <name type="common">Human</name>
    <dbReference type="NCBI Taxonomy" id="9606"/>
</organismHost>
<keyword id="KW-0025">Alternative splicing</keyword>
<keyword id="KW-1262">Eukaryotic host gene expression shutoff by virus</keyword>
<keyword id="KW-1035">Host cytoplasm</keyword>
<keyword id="KW-1190">Host gene expression shutoff by virus</keyword>
<keyword id="KW-1192">Host mRNA suppression by virus</keyword>
<keyword id="KW-1048">Host nucleus</keyword>
<keyword id="KW-0945">Host-virus interaction</keyword>
<keyword id="KW-1090">Inhibition of host innate immune response by virus</keyword>
<keyword id="KW-1114">Inhibition of host interferon signaling pathway by virus</keyword>
<keyword id="KW-1102">Inhibition of host PKR by virus</keyword>
<keyword id="KW-1103">Inhibition of host pre-mRNA processing by virus</keyword>
<keyword id="KW-1088">Inhibition of host RIG-I by virus</keyword>
<keyword id="KW-1113">Inhibition of host RLR pathway by virus</keyword>
<keyword id="KW-0922">Interferon antiviral system evasion</keyword>
<keyword id="KW-0694">RNA-binding</keyword>
<keyword id="KW-0832">Ubl conjugation</keyword>
<keyword id="KW-0899">Viral immunoevasion</keyword>
<evidence type="ECO:0000255" key="1">
    <source>
        <dbReference type="HAMAP-Rule" id="MF_04066"/>
    </source>
</evidence>
<evidence type="ECO:0000256" key="2">
    <source>
        <dbReference type="SAM" id="MobiDB-lite"/>
    </source>
</evidence>
<sequence>MDPNTVSSFQVDCFLWHVRKQVPDQELGDAPFLDRLRRDQKSLRGRGSTLGLNIETATRVGKQIVERILKEESDEALKMTMASAPASRYLTDMTIEEMSRDWFMLMPKQKVAGPLCIRMDQAIMDKNIILKANFSVIFDRLETLILLRAFTEEGAIVGEISPLPSLPGHTNEDVKNAIGVLIGGLEWNDNTVRVSKTLQRFAWRSSNENGRPPLTPKQKRKMARTIRSKV</sequence>
<reference key="1">
    <citation type="journal article" date="1992" name="Virology">
        <title>Sequence changes in the live attenuated, cold-adapted variants of influenza A/Leningrad/134/57 (H2N2) virus.</title>
        <authorList>
            <person name="Klimov A.I."/>
            <person name="Cox N.J."/>
            <person name="Yotov W.V."/>
            <person name="Rocha E."/>
            <person name="Alexandrova G.I."/>
            <person name="Kendal A.P."/>
        </authorList>
    </citation>
    <scope>NUCLEOTIDE SEQUENCE</scope>
</reference>
<reference key="2">
    <citation type="journal article" date="2003" name="Virology">
        <title>Intracellular warfare between human influenza viruses and human cells: the roles of the viral NS1 protein.</title>
        <authorList>
            <person name="Krug R.M."/>
            <person name="Yuan W."/>
            <person name="Noah D.L."/>
            <person name="Latham A.G."/>
        </authorList>
    </citation>
    <scope>REVIEW</scope>
</reference>
<accession>P69272</accession>
<accession>P26131</accession>
<name>NS1_I57A1</name>
<feature type="chain" id="PRO_0000078932" description="Non-structural protein 1">
    <location>
        <begin position="1"/>
        <end position="230"/>
    </location>
</feature>
<feature type="region of interest" description="RNA-binding and homodimerization" evidence="1">
    <location>
        <begin position="1"/>
        <end position="73"/>
    </location>
</feature>
<feature type="region of interest" description="CPSF4-binding" evidence="1">
    <location>
        <begin position="180"/>
        <end position="215"/>
    </location>
</feature>
<feature type="region of interest" description="Disordered" evidence="2">
    <location>
        <begin position="205"/>
        <end position="230"/>
    </location>
</feature>
<feature type="region of interest" description="PABPN1-binding" evidence="1">
    <location>
        <begin position="223"/>
        <end position="230"/>
    </location>
</feature>
<feature type="short sequence motif" description="Nuclear localization signal" evidence="1">
    <location>
        <begin position="34"/>
        <end position="38"/>
    </location>
</feature>
<feature type="short sequence motif" description="Nuclear export signal" evidence="1">
    <location>
        <begin position="137"/>
        <end position="146"/>
    </location>
</feature>
<feature type="compositionally biased region" description="Basic residues" evidence="2">
    <location>
        <begin position="217"/>
        <end position="230"/>
    </location>
</feature>
<comment type="function">
    <text evidence="1">Inhibits post-transcriptional processing of cellular pre-mRNA, by binding and inhibiting two cellular proteins that are required for the 3'-end processing of cellular pre-mRNAs: the 30 kDa cleavage and polyadenylation specificity factor/CPSF4 and the poly(A)-binding protein 2/PABPN1. In turn, unprocessed 3' end pre-mRNAs accumulate in the host nucleus and are no longer exported to the cytoplasm. Cellular protein synthesis is thereby shut off very early after virus infection. Viral protein synthesis is not affected by the inhibition of the cellular 3' end processing machinery because the poly(A) tails of viral mRNAs are produced by the viral polymerase through a stuttering mechanism. Prevents the establishment of the cellular antiviral state by inhibiting TRIM25-mediated RIGI ubiquitination, which normally triggers the antiviral transduction signal that leads to the activation of type I IFN genes by transcription factors IRF3 and IRF7. Also binds poly(A) and U6 snRNA. Inhibits the integrated stress response (ISR) in the infected cell by blocking dsRNA binding by EIF2AK2/PKR and further phosphorylation of EIF2S1/EIF-2ALPHA. Stress granule formation is thus inhibited, which allows protein synthesis and viral replication.</text>
</comment>
<comment type="subunit">
    <text evidence="1">Homodimer. Interacts with host TRIM25 (via coiled coil); this interaction specifically inhibits TRIM25 multimerization and TRIM25-mediated RIGI CARD ubiquitination. Interacts with human EIF2AK2/PKR, CPSF4, IVNS1ABP and PABPN1.</text>
</comment>
<comment type="subcellular location">
    <subcellularLocation>
        <location evidence="1">Host nucleus</location>
    </subcellularLocation>
    <subcellularLocation>
        <location evidence="1">Host cytoplasm</location>
    </subcellularLocation>
    <text evidence="1">In uninfected, transfected cells, NS1 is localized in the nucleus. Only in virus infected cells, the nuclear export signal is unveiled, presumably by a viral protein, and a fraction of NS1 is exported in the cytoplasm.</text>
</comment>
<comment type="alternative products">
    <event type="alternative splicing"/>
    <isoform>
        <id>P69272-1</id>
        <name>NS1</name>
        <sequence type="displayed"/>
    </isoform>
    <isoform>
        <id>P69260-1</id>
        <name>NEP</name>
        <name>NS2</name>
        <sequence type="external"/>
    </isoform>
</comment>
<comment type="domain">
    <text evidence="1">The dsRNA-binding region is required for suppression of RNA silencing.</text>
</comment>
<comment type="PTM">
    <text evidence="1">Upon interferon induction, ISGylated via host HERC5; this results in the impairment of NS1 interaction with RNA targets due to its inability to form homodimers and to interact with host EIF2AK2/PKR.</text>
</comment>
<comment type="similarity">
    <text evidence="1">Belongs to the influenza A viruses NS1 family.</text>
</comment>
<dbReference type="EMBL" id="M81572">
    <property type="protein sequence ID" value="AAA19199.1"/>
    <property type="status" value="ALT_TERM"/>
    <property type="molecule type" value="Unassigned_RNA"/>
</dbReference>
<dbReference type="SMR" id="P69272"/>
<dbReference type="GO" id="GO:0030430">
    <property type="term" value="C:host cell cytoplasm"/>
    <property type="evidence" value="ECO:0007669"/>
    <property type="project" value="UniProtKB-SubCell"/>
</dbReference>
<dbReference type="GO" id="GO:0042025">
    <property type="term" value="C:host cell nucleus"/>
    <property type="evidence" value="ECO:0007669"/>
    <property type="project" value="UniProtKB-SubCell"/>
</dbReference>
<dbReference type="GO" id="GO:0030291">
    <property type="term" value="F:protein serine/threonine kinase inhibitor activity"/>
    <property type="evidence" value="ECO:0007669"/>
    <property type="project" value="UniProtKB-KW"/>
</dbReference>
<dbReference type="GO" id="GO:0003723">
    <property type="term" value="F:RNA binding"/>
    <property type="evidence" value="ECO:0007669"/>
    <property type="project" value="UniProtKB-KW"/>
</dbReference>
<dbReference type="GO" id="GO:0039540">
    <property type="term" value="P:symbiont-mediated suppression of host cytoplasmic pattern recognition receptor signaling pathway via inhibition of RIG-I activity"/>
    <property type="evidence" value="ECO:0007669"/>
    <property type="project" value="UniProtKB-KW"/>
</dbReference>
<dbReference type="GO" id="GO:0039657">
    <property type="term" value="P:symbiont-mediated suppression of host gene expression"/>
    <property type="evidence" value="ECO:0007669"/>
    <property type="project" value="UniProtKB-KW"/>
</dbReference>
<dbReference type="GO" id="GO:0039524">
    <property type="term" value="P:symbiont-mediated suppression of host mRNA processing"/>
    <property type="evidence" value="ECO:0007669"/>
    <property type="project" value="UniProtKB-KW"/>
</dbReference>
<dbReference type="GO" id="GO:0039580">
    <property type="term" value="P:symbiont-mediated suppression of host PKR/eIFalpha signaling"/>
    <property type="evidence" value="ECO:0007669"/>
    <property type="project" value="UniProtKB-KW"/>
</dbReference>
<dbReference type="GO" id="GO:0039502">
    <property type="term" value="P:symbiont-mediated suppression of host type I interferon-mediated signaling pathway"/>
    <property type="evidence" value="ECO:0007669"/>
    <property type="project" value="UniProtKB-KW"/>
</dbReference>
<dbReference type="FunFam" id="1.10.287.10:FF:000001">
    <property type="entry name" value="Non-structural protein 1"/>
    <property type="match status" value="1"/>
</dbReference>
<dbReference type="FunFam" id="3.30.420.330:FF:000001">
    <property type="entry name" value="Non-structural protein 1"/>
    <property type="match status" value="1"/>
</dbReference>
<dbReference type="Gene3D" id="3.30.420.330">
    <property type="entry name" value="Influenza virus non-structural protein, effector domain"/>
    <property type="match status" value="1"/>
</dbReference>
<dbReference type="Gene3D" id="1.10.287.10">
    <property type="entry name" value="S15/NS1, RNA-binding"/>
    <property type="match status" value="1"/>
</dbReference>
<dbReference type="HAMAP" id="MF_04066">
    <property type="entry name" value="INFV_NS1"/>
    <property type="match status" value="1"/>
</dbReference>
<dbReference type="InterPro" id="IPR004208">
    <property type="entry name" value="NS1"/>
</dbReference>
<dbReference type="InterPro" id="IPR000256">
    <property type="entry name" value="NS1A"/>
</dbReference>
<dbReference type="InterPro" id="IPR038064">
    <property type="entry name" value="NS1A_effect_dom-like_sf"/>
</dbReference>
<dbReference type="InterPro" id="IPR009068">
    <property type="entry name" value="uS15_NS1_RNA-bd_sf"/>
</dbReference>
<dbReference type="Pfam" id="PF00600">
    <property type="entry name" value="Flu_NS1"/>
    <property type="match status" value="1"/>
</dbReference>
<dbReference type="SUPFAM" id="SSF143021">
    <property type="entry name" value="Ns1 effector domain-like"/>
    <property type="match status" value="1"/>
</dbReference>
<dbReference type="SUPFAM" id="SSF47060">
    <property type="entry name" value="S15/NS1 RNA-binding domain"/>
    <property type="match status" value="1"/>
</dbReference>
<protein>
    <recommendedName>
        <fullName evidence="1">Non-structural protein 1</fullName>
        <shortName evidence="1">NS1</shortName>
    </recommendedName>
    <alternativeName>
        <fullName evidence="1">NS1A</fullName>
    </alternativeName>
</protein>
<gene>
    <name evidence="1" type="primary">NS</name>
</gene>